<dbReference type="EMBL" id="Z22176">
    <property type="protein sequence ID" value="CAD91716.2"/>
    <property type="molecule type" value="Genomic_DNA"/>
</dbReference>
<dbReference type="PIR" id="S40924">
    <property type="entry name" value="S40924"/>
</dbReference>
<dbReference type="PIR" id="S40925">
    <property type="entry name" value="S40925"/>
</dbReference>
<dbReference type="RefSeq" id="NP_001022983.2">
    <property type="nucleotide sequence ID" value="NM_001027812.6"/>
</dbReference>
<dbReference type="BioGRID" id="41540">
    <property type="interactions" value="5"/>
</dbReference>
<dbReference type="FunCoup" id="P34601">
    <property type="interactions" value="464"/>
</dbReference>
<dbReference type="IntAct" id="P34601">
    <property type="interactions" value="1"/>
</dbReference>
<dbReference type="STRING" id="6239.ZK1098.2.1"/>
<dbReference type="iPTMnet" id="P34601"/>
<dbReference type="PaxDb" id="6239-ZK1098.2"/>
<dbReference type="PeptideAtlas" id="P34601"/>
<dbReference type="EnsemblMetazoa" id="ZK1098.2.1">
    <property type="protein sequence ID" value="ZK1098.2.1"/>
    <property type="gene ID" value="WBGene00014219"/>
</dbReference>
<dbReference type="GeneID" id="176345"/>
<dbReference type="KEGG" id="cel:CELE_ZK1098.2"/>
<dbReference type="UCSC" id="ZK1098.2">
    <property type="organism name" value="c. elegans"/>
</dbReference>
<dbReference type="AGR" id="WB:WBGene00014219"/>
<dbReference type="CTD" id="176345"/>
<dbReference type="WormBase" id="ZK1098.2">
    <property type="protein sequence ID" value="CE41492"/>
    <property type="gene ID" value="WBGene00014219"/>
</dbReference>
<dbReference type="eggNOG" id="ENOG502RT9G">
    <property type="taxonomic scope" value="Eukaryota"/>
</dbReference>
<dbReference type="GeneTree" id="ENSGT00530000067018"/>
<dbReference type="HOGENOM" id="CLU_028063_0_0_1"/>
<dbReference type="InParanoid" id="P34601"/>
<dbReference type="OMA" id="QTRWLIG"/>
<dbReference type="OrthoDB" id="5103at2759"/>
<dbReference type="PRO" id="PR:P34601"/>
<dbReference type="Proteomes" id="UP000001940">
    <property type="component" value="Chromosome III"/>
</dbReference>
<dbReference type="Bgee" id="WBGene00014219">
    <property type="expression patterns" value="Expressed in germ line (C elegans) and 4 other cell types or tissues"/>
</dbReference>
<dbReference type="InterPro" id="IPR012337">
    <property type="entry name" value="RNaseH-like_sf"/>
</dbReference>
<dbReference type="PANTHER" id="PTHR37432:SF1">
    <property type="entry name" value="HAT C-TERMINAL DIMERISATION DOMAIN-CONTAINING PROTEIN-RELATED"/>
    <property type="match status" value="1"/>
</dbReference>
<dbReference type="PANTHER" id="PTHR37432">
    <property type="entry name" value="PROTEIN CBG21304"/>
    <property type="match status" value="1"/>
</dbReference>
<dbReference type="SUPFAM" id="SSF53098">
    <property type="entry name" value="Ribonuclease H-like"/>
    <property type="match status" value="1"/>
</dbReference>
<proteinExistence type="predicted"/>
<gene>
    <name type="ORF">ZK1098.2</name>
</gene>
<organism>
    <name type="scientific">Caenorhabditis elegans</name>
    <dbReference type="NCBI Taxonomy" id="6239"/>
    <lineage>
        <taxon>Eukaryota</taxon>
        <taxon>Metazoa</taxon>
        <taxon>Ecdysozoa</taxon>
        <taxon>Nematoda</taxon>
        <taxon>Chromadorea</taxon>
        <taxon>Rhabditida</taxon>
        <taxon>Rhabditina</taxon>
        <taxon>Rhabditomorpha</taxon>
        <taxon>Rhabditoidea</taxon>
        <taxon>Rhabditidae</taxon>
        <taxon>Peloderinae</taxon>
        <taxon>Caenorhabditis</taxon>
    </lineage>
</organism>
<reference key="1">
    <citation type="journal article" date="1994" name="Nature">
        <title>2.2 Mb of contiguous nucleotide sequence from chromosome III of C. elegans.</title>
        <authorList>
            <person name="Wilson R."/>
            <person name="Ainscough R."/>
            <person name="Anderson K."/>
            <person name="Baynes C."/>
            <person name="Berks M."/>
            <person name="Bonfield J."/>
            <person name="Burton J."/>
            <person name="Connell M."/>
            <person name="Copsey T."/>
            <person name="Cooper J."/>
            <person name="Coulson A."/>
            <person name="Craxton M."/>
            <person name="Dear S."/>
            <person name="Du Z."/>
            <person name="Durbin R."/>
            <person name="Favello A."/>
            <person name="Fraser A."/>
            <person name="Fulton L."/>
            <person name="Gardner A."/>
            <person name="Green P."/>
            <person name="Hawkins T."/>
            <person name="Hillier L."/>
            <person name="Jier M."/>
            <person name="Johnston L."/>
            <person name="Jones M."/>
            <person name="Kershaw J."/>
            <person name="Kirsten J."/>
            <person name="Laisster N."/>
            <person name="Latreille P."/>
            <person name="Lightning J."/>
            <person name="Lloyd C."/>
            <person name="Mortimore B."/>
            <person name="O'Callaghan M."/>
            <person name="Parsons J."/>
            <person name="Percy C."/>
            <person name="Rifken L."/>
            <person name="Roopra A."/>
            <person name="Saunders D."/>
            <person name="Shownkeen R."/>
            <person name="Sims M."/>
            <person name="Smaldon N."/>
            <person name="Smith A."/>
            <person name="Smith M."/>
            <person name="Sonnhammer E."/>
            <person name="Staden R."/>
            <person name="Sulston J."/>
            <person name="Thierry-Mieg J."/>
            <person name="Thomas K."/>
            <person name="Vaudin M."/>
            <person name="Vaughan K."/>
            <person name="Waterston R."/>
            <person name="Watson A."/>
            <person name="Weinstock L."/>
            <person name="Wilkinson-Sproat J."/>
            <person name="Wohldman P."/>
        </authorList>
    </citation>
    <scope>NUCLEOTIDE SEQUENCE [LARGE SCALE GENOMIC DNA]</scope>
    <source>
        <strain>Bristol N2</strain>
    </source>
</reference>
<reference key="2">
    <citation type="journal article" date="1998" name="Science">
        <title>Genome sequence of the nematode C. elegans: a platform for investigating biology.</title>
        <authorList>
            <consortium name="The C. elegans sequencing consortium"/>
        </authorList>
    </citation>
    <scope>NUCLEOTIDE SEQUENCE [LARGE SCALE GENOMIC DNA]</scope>
    <source>
        <strain>Bristol N2</strain>
    </source>
</reference>
<sequence>MEVKIEETDWDEGVPGISFLKDAFSREEISPPKDDKNRKKEEVRMKLESGEYSVVYRCPTFDEILNENGQKIDLVQCKNCFGFLSARTGGHMKNHKNQRCKPLNGPPEKKPKLDPQVVGNLQNHILDFVTESGVSLNIAESEKFRIFIISMIITGNPNVNVDEHQFLSGEWIRKTMKEKSCQYLDNIGAELKDPVSKGDACLILDYGRQLDDTFSIFVSYTNRSSGYFSLRVIPLAFTPLFEKKITEKTLDYILHATDRVGLPKEHVLKLKVVAEGATNMLKLGEYFDNCNLFTVCLSFSSKMCRKSFRSTETVEKFDNFIRKITCESDRKRNRNLWNDFLQTPALQSLINIYVLSLILLCFQLTEQLSRTPAQSRANEWLASYHCARDILHVFPQIADLKDDRIEPLVDELRQCKGVLEDCFEIFSLFENPLKLLEQPEQQIQNVAGVMFELYAQLDRIYIKAVDPKQPKECLAAVAKMAKLSIAHYTKITVTDVHLICAFLSPDSKNLKNFPAPKKNKAYRIVNTLMKDVVVPPPSLSQPILSPLLMAIKNDPSPIPTVSQEFNDYVQLVVSSKDATLAPLEFWAKYQERFPRMSEIAAKNFCVMSSPGVCGPSFIVLRSLFRVDRHSKFPDTTELMMISYLMANELK</sequence>
<feature type="chain" id="PRO_0000065556" description="Uncharacterized protein ZK1098.2">
    <location>
        <begin position="1"/>
        <end position="650"/>
    </location>
</feature>
<protein>
    <recommendedName>
        <fullName>Uncharacterized protein ZK1098.2</fullName>
    </recommendedName>
</protein>
<accession>P34601</accession>
<accession>P34602</accession>
<keyword id="KW-1185">Reference proteome</keyword>
<name>YO62_CAEEL</name>